<keyword id="KW-0143">Chaperone</keyword>
<keyword id="KW-0963">Cytoplasm</keyword>
<keyword id="KW-0653">Protein transport</keyword>
<keyword id="KW-0811">Translocation</keyword>
<keyword id="KW-0813">Transport</keyword>
<dbReference type="EMBL" id="CP000094">
    <property type="protein sequence ID" value="ABA72080.1"/>
    <property type="molecule type" value="Genomic_DNA"/>
</dbReference>
<dbReference type="RefSeq" id="WP_007909233.1">
    <property type="nucleotide sequence ID" value="NC_007492.2"/>
</dbReference>
<dbReference type="SMR" id="Q3KJH6"/>
<dbReference type="KEGG" id="pfo:Pfl01_0336"/>
<dbReference type="eggNOG" id="COG1952">
    <property type="taxonomic scope" value="Bacteria"/>
</dbReference>
<dbReference type="HOGENOM" id="CLU_111574_1_0_6"/>
<dbReference type="Proteomes" id="UP000002704">
    <property type="component" value="Chromosome"/>
</dbReference>
<dbReference type="GO" id="GO:0005737">
    <property type="term" value="C:cytoplasm"/>
    <property type="evidence" value="ECO:0007669"/>
    <property type="project" value="UniProtKB-SubCell"/>
</dbReference>
<dbReference type="GO" id="GO:0051082">
    <property type="term" value="F:unfolded protein binding"/>
    <property type="evidence" value="ECO:0007669"/>
    <property type="project" value="InterPro"/>
</dbReference>
<dbReference type="GO" id="GO:0006457">
    <property type="term" value="P:protein folding"/>
    <property type="evidence" value="ECO:0007669"/>
    <property type="project" value="UniProtKB-UniRule"/>
</dbReference>
<dbReference type="GO" id="GO:0051262">
    <property type="term" value="P:protein tetramerization"/>
    <property type="evidence" value="ECO:0007669"/>
    <property type="project" value="InterPro"/>
</dbReference>
<dbReference type="GO" id="GO:0015031">
    <property type="term" value="P:protein transport"/>
    <property type="evidence" value="ECO:0007669"/>
    <property type="project" value="UniProtKB-UniRule"/>
</dbReference>
<dbReference type="Gene3D" id="3.10.420.10">
    <property type="entry name" value="SecB-like"/>
    <property type="match status" value="1"/>
</dbReference>
<dbReference type="HAMAP" id="MF_00821">
    <property type="entry name" value="SecB"/>
    <property type="match status" value="1"/>
</dbReference>
<dbReference type="InterPro" id="IPR003708">
    <property type="entry name" value="SecB"/>
</dbReference>
<dbReference type="InterPro" id="IPR035958">
    <property type="entry name" value="SecB-like_sf"/>
</dbReference>
<dbReference type="NCBIfam" id="NF004393">
    <property type="entry name" value="PRK05751.1-4"/>
    <property type="match status" value="1"/>
</dbReference>
<dbReference type="NCBIfam" id="TIGR00809">
    <property type="entry name" value="secB"/>
    <property type="match status" value="1"/>
</dbReference>
<dbReference type="PANTHER" id="PTHR36918">
    <property type="match status" value="1"/>
</dbReference>
<dbReference type="PANTHER" id="PTHR36918:SF1">
    <property type="entry name" value="PROTEIN-EXPORT PROTEIN SECB"/>
    <property type="match status" value="1"/>
</dbReference>
<dbReference type="Pfam" id="PF02556">
    <property type="entry name" value="SecB"/>
    <property type="match status" value="1"/>
</dbReference>
<dbReference type="PRINTS" id="PR01594">
    <property type="entry name" value="SECBCHAPRONE"/>
</dbReference>
<dbReference type="SUPFAM" id="SSF54611">
    <property type="entry name" value="SecB-like"/>
    <property type="match status" value="1"/>
</dbReference>
<comment type="function">
    <text evidence="1">One of the proteins required for the normal export of preproteins out of the cell cytoplasm. It is a molecular chaperone that binds to a subset of precursor proteins, maintaining them in a translocation-competent state. It also specifically binds to its receptor SecA.</text>
</comment>
<comment type="subunit">
    <text evidence="1">Homotetramer, a dimer of dimers. One homotetramer interacts with 1 SecA dimer.</text>
</comment>
<comment type="subcellular location">
    <subcellularLocation>
        <location evidence="1">Cytoplasm</location>
    </subcellularLocation>
</comment>
<comment type="similarity">
    <text evidence="1">Belongs to the SecB family.</text>
</comment>
<sequence>MTDQQNTAASEEETAPQFSLQRIYVRDLSFEAPKSPAIFRQQWDPAVALDLNTRQKALEGDFYEVVLTLSVTVKNGEEVAFIAEVQQAGIFLIKNLDAASMSHTLGAFCPNILFPYARETLDSLVTRGSFPALMLAPVNFDALYAQELQRMQESGETPTVQ</sequence>
<name>SECB_PSEPF</name>
<protein>
    <recommendedName>
        <fullName evidence="1">Protein-export protein SecB</fullName>
    </recommendedName>
</protein>
<accession>Q3KJH6</accession>
<proteinExistence type="inferred from homology"/>
<evidence type="ECO:0000255" key="1">
    <source>
        <dbReference type="HAMAP-Rule" id="MF_00821"/>
    </source>
</evidence>
<gene>
    <name evidence="1" type="primary">secB</name>
    <name type="ordered locus">Pfl01_0336</name>
</gene>
<organism>
    <name type="scientific">Pseudomonas fluorescens (strain Pf0-1)</name>
    <dbReference type="NCBI Taxonomy" id="205922"/>
    <lineage>
        <taxon>Bacteria</taxon>
        <taxon>Pseudomonadati</taxon>
        <taxon>Pseudomonadota</taxon>
        <taxon>Gammaproteobacteria</taxon>
        <taxon>Pseudomonadales</taxon>
        <taxon>Pseudomonadaceae</taxon>
        <taxon>Pseudomonas</taxon>
    </lineage>
</organism>
<feature type="chain" id="PRO_1000062496" description="Protein-export protein SecB">
    <location>
        <begin position="1"/>
        <end position="161"/>
    </location>
</feature>
<reference key="1">
    <citation type="journal article" date="2009" name="Genome Biol.">
        <title>Genomic and genetic analyses of diversity and plant interactions of Pseudomonas fluorescens.</title>
        <authorList>
            <person name="Silby M.W."/>
            <person name="Cerdeno-Tarraga A.M."/>
            <person name="Vernikos G.S."/>
            <person name="Giddens S.R."/>
            <person name="Jackson R.W."/>
            <person name="Preston G.M."/>
            <person name="Zhang X.-X."/>
            <person name="Moon C.D."/>
            <person name="Gehrig S.M."/>
            <person name="Godfrey S.A.C."/>
            <person name="Knight C.G."/>
            <person name="Malone J.G."/>
            <person name="Robinson Z."/>
            <person name="Spiers A.J."/>
            <person name="Harris S."/>
            <person name="Challis G.L."/>
            <person name="Yaxley A.M."/>
            <person name="Harris D."/>
            <person name="Seeger K."/>
            <person name="Murphy L."/>
            <person name="Rutter S."/>
            <person name="Squares R."/>
            <person name="Quail M.A."/>
            <person name="Saunders E."/>
            <person name="Mavromatis K."/>
            <person name="Brettin T.S."/>
            <person name="Bentley S.D."/>
            <person name="Hothersall J."/>
            <person name="Stephens E."/>
            <person name="Thomas C.M."/>
            <person name="Parkhill J."/>
            <person name="Levy S.B."/>
            <person name="Rainey P.B."/>
            <person name="Thomson N.R."/>
        </authorList>
    </citation>
    <scope>NUCLEOTIDE SEQUENCE [LARGE SCALE GENOMIC DNA]</scope>
    <source>
        <strain>Pf0-1</strain>
    </source>
</reference>